<feature type="chain" id="PRO_0000164215" description="Probable multidrug resistance protein NorM">
    <location>
        <begin position="1"/>
        <end position="465"/>
    </location>
</feature>
<feature type="transmembrane region" description="Helical" evidence="2">
    <location>
        <begin position="21"/>
        <end position="43"/>
    </location>
</feature>
<feature type="transmembrane region" description="Helical" evidence="2">
    <location>
        <begin position="58"/>
        <end position="80"/>
    </location>
</feature>
<feature type="transmembrane region" description="Helical" evidence="2">
    <location>
        <begin position="100"/>
        <end position="122"/>
    </location>
</feature>
<feature type="transmembrane region" description="Helical" evidence="2">
    <location>
        <begin position="137"/>
        <end position="156"/>
    </location>
</feature>
<feature type="transmembrane region" description="Helical" evidence="2">
    <location>
        <begin position="169"/>
        <end position="191"/>
    </location>
</feature>
<feature type="transmembrane region" description="Helical" evidence="2">
    <location>
        <begin position="201"/>
        <end position="223"/>
    </location>
</feature>
<feature type="transmembrane region" description="Helical" evidence="2">
    <location>
        <begin position="250"/>
        <end position="272"/>
    </location>
</feature>
<feature type="transmembrane region" description="Helical" evidence="2">
    <location>
        <begin position="287"/>
        <end position="309"/>
    </location>
</feature>
<feature type="transmembrane region" description="Helical" evidence="2">
    <location>
        <begin position="322"/>
        <end position="344"/>
    </location>
</feature>
<feature type="transmembrane region" description="Helical" evidence="2">
    <location>
        <begin position="359"/>
        <end position="376"/>
    </location>
</feature>
<feature type="transmembrane region" description="Helical" evidence="2">
    <location>
        <begin position="395"/>
        <end position="417"/>
    </location>
</feature>
<feature type="transmembrane region" description="Helical" evidence="2">
    <location>
        <begin position="427"/>
        <end position="449"/>
    </location>
</feature>
<accession>Q7NXN3</accession>
<protein>
    <recommendedName>
        <fullName>Probable multidrug resistance protein NorM</fullName>
    </recommendedName>
    <alternativeName>
        <fullName>Multidrug-efflux transporter</fullName>
    </alternativeName>
</protein>
<comment type="function">
    <text evidence="1">Multidrug efflux pump.</text>
</comment>
<comment type="subcellular location">
    <subcellularLocation>
        <location evidence="1">Cell inner membrane</location>
        <topology evidence="1">Multi-pass membrane protein</topology>
    </subcellularLocation>
</comment>
<comment type="similarity">
    <text evidence="3">Belongs to the multi antimicrobial extrusion (MATE) (TC 2.A.66.1) family.</text>
</comment>
<evidence type="ECO:0000250" key="1"/>
<evidence type="ECO:0000255" key="2"/>
<evidence type="ECO:0000305" key="3"/>
<sequence length="465" mass="50020">MLFELNRASRAEILAEARQIAGLALPMMVAQIAQVATSFVDTVMAGRVGTDDLAAVSLGASVFITVYVTLMGVVAALNPILSHHLGSRDRRAFSRDAAQGLWFGLMLGALGAGLMLLLEAPLRHWLHLPPDVTDKVMLFITGAAIGMPAAMAHRALHAYASSLGHPKAIMVVSLLALALNIPLNYILIHGLFGMPRMGGAGCGWATGIVFWFNCLALLTYVSWHRHFRDSRILAGLAAPDWRRFLAFLKLGVPIGLSFFVEVSLFSFIALLIAELGTVVVATHQSVLNFSSLIYMLPQSVATALSVRVGHHAGAGDYRAARFISGVGMLMGLAMAGGAMALVLLLREPIMWMYSADPRVIAMGTTLLLFAAVYQLTDAAQTIASGALRGYKLTAVPMLIHITSFWVAGLGLGMLLGLTDWIVPRMGIYGFWTALVISLTVAGLLLTYYLARASRKRLHRDQGILL</sequence>
<dbReference type="EMBL" id="AE016825">
    <property type="protein sequence ID" value="AAQ59269.1"/>
    <property type="molecule type" value="Genomic_DNA"/>
</dbReference>
<dbReference type="RefSeq" id="WP_011135145.1">
    <property type="nucleotide sequence ID" value="NC_005085.1"/>
</dbReference>
<dbReference type="SMR" id="Q7NXN3"/>
<dbReference type="STRING" id="243365.CV_1593"/>
<dbReference type="KEGG" id="cvi:CV_1593"/>
<dbReference type="eggNOG" id="COG0534">
    <property type="taxonomic scope" value="Bacteria"/>
</dbReference>
<dbReference type="HOGENOM" id="CLU_012893_6_0_4"/>
<dbReference type="OrthoDB" id="9780160at2"/>
<dbReference type="Proteomes" id="UP000001424">
    <property type="component" value="Chromosome"/>
</dbReference>
<dbReference type="GO" id="GO:0005886">
    <property type="term" value="C:plasma membrane"/>
    <property type="evidence" value="ECO:0007669"/>
    <property type="project" value="UniProtKB-SubCell"/>
</dbReference>
<dbReference type="GO" id="GO:0015297">
    <property type="term" value="F:antiporter activity"/>
    <property type="evidence" value="ECO:0007669"/>
    <property type="project" value="UniProtKB-KW"/>
</dbReference>
<dbReference type="GO" id="GO:0042910">
    <property type="term" value="F:xenobiotic transmembrane transporter activity"/>
    <property type="evidence" value="ECO:0007669"/>
    <property type="project" value="InterPro"/>
</dbReference>
<dbReference type="GO" id="GO:0006811">
    <property type="term" value="P:monoatomic ion transport"/>
    <property type="evidence" value="ECO:0007669"/>
    <property type="project" value="UniProtKB-KW"/>
</dbReference>
<dbReference type="CDD" id="cd13131">
    <property type="entry name" value="MATE_NorM_like"/>
    <property type="match status" value="1"/>
</dbReference>
<dbReference type="InterPro" id="IPR002528">
    <property type="entry name" value="MATE_fam"/>
</dbReference>
<dbReference type="InterPro" id="IPR050222">
    <property type="entry name" value="MATE_MdtK"/>
</dbReference>
<dbReference type="InterPro" id="IPR048279">
    <property type="entry name" value="MdtK-like"/>
</dbReference>
<dbReference type="NCBIfam" id="TIGR00797">
    <property type="entry name" value="matE"/>
    <property type="match status" value="1"/>
</dbReference>
<dbReference type="PANTHER" id="PTHR43298:SF2">
    <property type="entry name" value="FMN_FAD EXPORTER YEEO-RELATED"/>
    <property type="match status" value="1"/>
</dbReference>
<dbReference type="PANTHER" id="PTHR43298">
    <property type="entry name" value="MULTIDRUG RESISTANCE PROTEIN NORM-RELATED"/>
    <property type="match status" value="1"/>
</dbReference>
<dbReference type="Pfam" id="PF01554">
    <property type="entry name" value="MatE"/>
    <property type="match status" value="2"/>
</dbReference>
<dbReference type="PIRSF" id="PIRSF006603">
    <property type="entry name" value="DinF"/>
    <property type="match status" value="1"/>
</dbReference>
<proteinExistence type="inferred from homology"/>
<name>NORM_CHRVO</name>
<gene>
    <name type="primary">norM</name>
    <name type="ordered locus">CV_1593</name>
</gene>
<organism>
    <name type="scientific">Chromobacterium violaceum (strain ATCC 12472 / DSM 30191 / JCM 1249 / CCUG 213 / NBRC 12614 / NCIMB 9131 / NCTC 9757 / MK)</name>
    <dbReference type="NCBI Taxonomy" id="243365"/>
    <lineage>
        <taxon>Bacteria</taxon>
        <taxon>Pseudomonadati</taxon>
        <taxon>Pseudomonadota</taxon>
        <taxon>Betaproteobacteria</taxon>
        <taxon>Neisseriales</taxon>
        <taxon>Chromobacteriaceae</taxon>
        <taxon>Chromobacterium</taxon>
    </lineage>
</organism>
<reference key="1">
    <citation type="journal article" date="2003" name="Proc. Natl. Acad. Sci. U.S.A.">
        <title>The complete genome sequence of Chromobacterium violaceum reveals remarkable and exploitable bacterial adaptability.</title>
        <authorList>
            <person name="Vasconcelos A.T.R."/>
            <person name="de Almeida D.F."/>
            <person name="Hungria M."/>
            <person name="Guimaraes C.T."/>
            <person name="Antonio R.V."/>
            <person name="Almeida F.C."/>
            <person name="de Almeida L.G.P."/>
            <person name="de Almeida R."/>
            <person name="Alves-Gomes J.A."/>
            <person name="Andrade E.M."/>
            <person name="Araripe J."/>
            <person name="de Araujo M.F.F."/>
            <person name="Astolfi-Filho S."/>
            <person name="Azevedo V."/>
            <person name="Baptista A.J."/>
            <person name="Bataus L.A.M."/>
            <person name="Batista J.S."/>
            <person name="Belo A."/>
            <person name="van den Berg C."/>
            <person name="Bogo M."/>
            <person name="Bonatto S."/>
            <person name="Bordignon J."/>
            <person name="Brigido M.M."/>
            <person name="Brito C.A."/>
            <person name="Brocchi M."/>
            <person name="Burity H.A."/>
            <person name="Camargo A.A."/>
            <person name="Cardoso D.D.P."/>
            <person name="Carneiro N.P."/>
            <person name="Carraro D.M."/>
            <person name="Carvalho C.M.B."/>
            <person name="Cascardo J.C.M."/>
            <person name="Cavada B.S."/>
            <person name="Chueire L.M.O."/>
            <person name="Creczynski-Pasa T.B."/>
            <person name="Cunha-Junior N.C."/>
            <person name="Fagundes N."/>
            <person name="Falcao C.L."/>
            <person name="Fantinatti F."/>
            <person name="Farias I.P."/>
            <person name="Felipe M.S.S."/>
            <person name="Ferrari L.P."/>
            <person name="Ferro J.A."/>
            <person name="Ferro M.I.T."/>
            <person name="Franco G.R."/>
            <person name="Freitas N.S.A."/>
            <person name="Furlan L.R."/>
            <person name="Gazzinelli R.T."/>
            <person name="Gomes E.A."/>
            <person name="Goncalves P.R."/>
            <person name="Grangeiro T.B."/>
            <person name="Grattapaglia D."/>
            <person name="Grisard E.C."/>
            <person name="Hanna E.S."/>
            <person name="Jardim S.N."/>
            <person name="Laurino J."/>
            <person name="Leoi L.C.T."/>
            <person name="Lima L.F.A."/>
            <person name="Loureiro M.F."/>
            <person name="Lyra M.C.C.P."/>
            <person name="Madeira H.M.F."/>
            <person name="Manfio G.P."/>
            <person name="Maranhao A.Q."/>
            <person name="Martins W.S."/>
            <person name="di Mauro S.M.Z."/>
            <person name="de Medeiros S.R.B."/>
            <person name="Meissner R.V."/>
            <person name="Moreira M.A.M."/>
            <person name="Nascimento F.F."/>
            <person name="Nicolas M.F."/>
            <person name="Oliveira J.G."/>
            <person name="Oliveira S.C."/>
            <person name="Paixao R.F.C."/>
            <person name="Parente J.A."/>
            <person name="Pedrosa F.O."/>
            <person name="Pena S.D.J."/>
            <person name="Pereira J.O."/>
            <person name="Pereira M."/>
            <person name="Pinto L.S.R.C."/>
            <person name="Pinto L.S."/>
            <person name="Porto J.I.R."/>
            <person name="Potrich D.P."/>
            <person name="Ramalho-Neto C.E."/>
            <person name="Reis A.M.M."/>
            <person name="Rigo L.U."/>
            <person name="Rondinelli E."/>
            <person name="Santos E.B.P."/>
            <person name="Santos F.R."/>
            <person name="Schneider M.P.C."/>
            <person name="Seuanez H.N."/>
            <person name="Silva A.M.R."/>
            <person name="da Silva A.L.C."/>
            <person name="Silva D.W."/>
            <person name="Silva R."/>
            <person name="Simoes I.C."/>
            <person name="Simon D."/>
            <person name="Soares C.M.A."/>
            <person name="Soares R.B.A."/>
            <person name="Souza E.M."/>
            <person name="Souza K.R.L."/>
            <person name="Souza R.C."/>
            <person name="Steffens M.B.R."/>
            <person name="Steindel M."/>
            <person name="Teixeira S.R."/>
            <person name="Urmenyi T."/>
            <person name="Vettore A."/>
            <person name="Wassem R."/>
            <person name="Zaha A."/>
            <person name="Simpson A.J.G."/>
        </authorList>
    </citation>
    <scope>NUCLEOTIDE SEQUENCE [LARGE SCALE GENOMIC DNA]</scope>
    <source>
        <strain>ATCC 12472 / DSM 30191 / JCM 1249 / CCUG 213 / NBRC 12614 / NCIMB 9131 / NCTC 9757 / MK</strain>
    </source>
</reference>
<keyword id="KW-0050">Antiport</keyword>
<keyword id="KW-0997">Cell inner membrane</keyword>
<keyword id="KW-1003">Cell membrane</keyword>
<keyword id="KW-0406">Ion transport</keyword>
<keyword id="KW-0472">Membrane</keyword>
<keyword id="KW-1185">Reference proteome</keyword>
<keyword id="KW-0812">Transmembrane</keyword>
<keyword id="KW-1133">Transmembrane helix</keyword>
<keyword id="KW-0813">Transport</keyword>